<evidence type="ECO:0000255" key="1">
    <source>
        <dbReference type="HAMAP-Rule" id="MF_03113"/>
    </source>
</evidence>
<evidence type="ECO:0000256" key="2">
    <source>
        <dbReference type="SAM" id="MobiDB-lite"/>
    </source>
</evidence>
<name>GET1_COCIM</name>
<keyword id="KW-0175">Coiled coil</keyword>
<keyword id="KW-0256">Endoplasmic reticulum</keyword>
<keyword id="KW-0472">Membrane</keyword>
<keyword id="KW-1185">Reference proteome</keyword>
<keyword id="KW-0812">Transmembrane</keyword>
<keyword id="KW-1133">Transmembrane helix</keyword>
<keyword id="KW-0813">Transport</keyword>
<reference key="1">
    <citation type="journal article" date="2009" name="Genome Res.">
        <title>Comparative genomic analyses of the human fungal pathogens Coccidioides and their relatives.</title>
        <authorList>
            <person name="Sharpton T.J."/>
            <person name="Stajich J.E."/>
            <person name="Rounsley S.D."/>
            <person name="Gardner M.J."/>
            <person name="Wortman J.R."/>
            <person name="Jordar V.S."/>
            <person name="Maiti R."/>
            <person name="Kodira C.D."/>
            <person name="Neafsey D.E."/>
            <person name="Zeng Q."/>
            <person name="Hung C.-Y."/>
            <person name="McMahan C."/>
            <person name="Muszewska A."/>
            <person name="Grynberg M."/>
            <person name="Mandel M.A."/>
            <person name="Kellner E.M."/>
            <person name="Barker B.M."/>
            <person name="Galgiani J.N."/>
            <person name="Orbach M.J."/>
            <person name="Kirkland T.N."/>
            <person name="Cole G.T."/>
            <person name="Henn M.R."/>
            <person name="Birren B.W."/>
            <person name="Taylor J.W."/>
        </authorList>
    </citation>
    <scope>NUCLEOTIDE SEQUENCE [LARGE SCALE GENOMIC DNA]</scope>
    <source>
        <strain>RS</strain>
    </source>
</reference>
<reference key="2">
    <citation type="journal article" date="2010" name="Genome Res.">
        <title>Population genomic sequencing of Coccidioides fungi reveals recent hybridization and transposon control.</title>
        <authorList>
            <person name="Neafsey D.E."/>
            <person name="Barker B.M."/>
            <person name="Sharpton T.J."/>
            <person name="Stajich J.E."/>
            <person name="Park D.J."/>
            <person name="Whiston E."/>
            <person name="Hung C.-Y."/>
            <person name="McMahan C."/>
            <person name="White J."/>
            <person name="Sykes S."/>
            <person name="Heiman D."/>
            <person name="Young S."/>
            <person name="Zeng Q."/>
            <person name="Abouelleil A."/>
            <person name="Aftuck L."/>
            <person name="Bessette D."/>
            <person name="Brown A."/>
            <person name="FitzGerald M."/>
            <person name="Lui A."/>
            <person name="Macdonald J.P."/>
            <person name="Priest M."/>
            <person name="Orbach M.J."/>
            <person name="Galgiani J.N."/>
            <person name="Kirkland T.N."/>
            <person name="Cole G.T."/>
            <person name="Birren B.W."/>
            <person name="Henn M.R."/>
            <person name="Taylor J.W."/>
            <person name="Rounsley S.D."/>
        </authorList>
    </citation>
    <scope>GENOME REANNOTATION</scope>
    <source>
        <strain>RS</strain>
    </source>
</reference>
<proteinExistence type="inferred from homology"/>
<sequence>MPSLLIIVLIIHVVTYLINTIGANTIDSLLWLLYLKLPNQTSQTANEQRRLKREVMQLKREMNATSSQDEFAKWAKLRRRHDKTMEEYEAKNKALGKHKSSFDLAVKSIRFFSTTGLKLFLQFWCSKTPIFELPRGWIPWQVEWVLSFPRAPLGTVSIQIWGGVCATVVSLAGDAIGVVNVYLTSKAPKQKEPATSGENSARPMAIKKEL</sequence>
<feature type="chain" id="PRO_0000388589" description="Protein GET1">
    <location>
        <begin position="1"/>
        <end position="210"/>
    </location>
</feature>
<feature type="topological domain" description="Lumenal" evidence="1">
    <location>
        <begin position="1"/>
        <end position="4"/>
    </location>
</feature>
<feature type="transmembrane region" description="Helical" evidence="1">
    <location>
        <begin position="5"/>
        <end position="24"/>
    </location>
</feature>
<feature type="topological domain" description="Cytoplasmic" evidence="1">
    <location>
        <begin position="25"/>
        <end position="110"/>
    </location>
</feature>
<feature type="transmembrane region" description="Helical" evidence="1">
    <location>
        <begin position="111"/>
        <end position="131"/>
    </location>
</feature>
<feature type="topological domain" description="Lumenal" evidence="1">
    <location>
        <begin position="132"/>
        <end position="155"/>
    </location>
</feature>
<feature type="transmembrane region" description="Helical" evidence="1">
    <location>
        <begin position="156"/>
        <end position="172"/>
    </location>
</feature>
<feature type="topological domain" description="Cytoplasmic" evidence="1">
    <location>
        <begin position="173"/>
        <end position="210"/>
    </location>
</feature>
<feature type="region of interest" description="Disordered" evidence="2">
    <location>
        <begin position="189"/>
        <end position="210"/>
    </location>
</feature>
<feature type="coiled-coil region" evidence="1">
    <location>
        <begin position="39"/>
        <end position="95"/>
    </location>
</feature>
<organism>
    <name type="scientific">Coccidioides immitis (strain RS)</name>
    <name type="common">Valley fever fungus</name>
    <dbReference type="NCBI Taxonomy" id="246410"/>
    <lineage>
        <taxon>Eukaryota</taxon>
        <taxon>Fungi</taxon>
        <taxon>Dikarya</taxon>
        <taxon>Ascomycota</taxon>
        <taxon>Pezizomycotina</taxon>
        <taxon>Eurotiomycetes</taxon>
        <taxon>Eurotiomycetidae</taxon>
        <taxon>Onygenales</taxon>
        <taxon>Onygenaceae</taxon>
        <taxon>Coccidioides</taxon>
    </lineage>
</organism>
<protein>
    <recommendedName>
        <fullName evidence="1">Protein GET1</fullName>
    </recommendedName>
    <alternativeName>
        <fullName evidence="1">Guided entry of tail-anchored proteins 1</fullName>
    </alternativeName>
</protein>
<dbReference type="EMBL" id="GG704916">
    <property type="protein sequence ID" value="EAS33169.3"/>
    <property type="molecule type" value="Genomic_DNA"/>
</dbReference>
<dbReference type="RefSeq" id="XP_001244752.2">
    <property type="nucleotide sequence ID" value="XM_001244751.2"/>
</dbReference>
<dbReference type="SMR" id="Q1DZS0"/>
<dbReference type="STRING" id="246410.Q1DZS0"/>
<dbReference type="GeneID" id="4562516"/>
<dbReference type="KEGG" id="cim:CIMG_04193"/>
<dbReference type="VEuPathDB" id="FungiDB:CIMG_04193"/>
<dbReference type="InParanoid" id="Q1DZS0"/>
<dbReference type="OMA" id="AEWIISF"/>
<dbReference type="OrthoDB" id="69461at2759"/>
<dbReference type="Proteomes" id="UP000001261">
    <property type="component" value="Unassembled WGS sequence"/>
</dbReference>
<dbReference type="GO" id="GO:0005789">
    <property type="term" value="C:endoplasmic reticulum membrane"/>
    <property type="evidence" value="ECO:0007669"/>
    <property type="project" value="UniProtKB-SubCell"/>
</dbReference>
<dbReference type="GO" id="GO:0043529">
    <property type="term" value="C:GET complex"/>
    <property type="evidence" value="ECO:0007669"/>
    <property type="project" value="InterPro"/>
</dbReference>
<dbReference type="GO" id="GO:0043495">
    <property type="term" value="F:protein-membrane adaptor activity"/>
    <property type="evidence" value="ECO:0007669"/>
    <property type="project" value="TreeGrafter"/>
</dbReference>
<dbReference type="GO" id="GO:0071816">
    <property type="term" value="P:tail-anchored membrane protein insertion into ER membrane"/>
    <property type="evidence" value="ECO:0007669"/>
    <property type="project" value="InterPro"/>
</dbReference>
<dbReference type="FunFam" id="1.10.287.660:FF:000006">
    <property type="entry name" value="Protein GET1"/>
    <property type="match status" value="1"/>
</dbReference>
<dbReference type="Gene3D" id="1.10.287.660">
    <property type="entry name" value="Helix hairpin bin"/>
    <property type="match status" value="1"/>
</dbReference>
<dbReference type="HAMAP" id="MF_03113">
    <property type="entry name" value="Get1"/>
    <property type="match status" value="1"/>
</dbReference>
<dbReference type="InterPro" id="IPR028945">
    <property type="entry name" value="Get1"/>
</dbReference>
<dbReference type="InterPro" id="IPR027538">
    <property type="entry name" value="Get1_fungi"/>
</dbReference>
<dbReference type="InterPro" id="IPR029012">
    <property type="entry name" value="Helix_hairpin_bin_sf"/>
</dbReference>
<dbReference type="PANTHER" id="PTHR42650:SF1">
    <property type="entry name" value="GUIDED ENTRY OF TAIL-ANCHORED PROTEINS FACTOR 1"/>
    <property type="match status" value="1"/>
</dbReference>
<dbReference type="PANTHER" id="PTHR42650">
    <property type="entry name" value="TAIL-ANCHORED PROTEIN INSERTION RECEPTOR WRB"/>
    <property type="match status" value="1"/>
</dbReference>
<dbReference type="Pfam" id="PF04420">
    <property type="entry name" value="CHD5"/>
    <property type="match status" value="1"/>
</dbReference>
<comment type="function">
    <text evidence="1">Required for the post-translational delivery of tail-anchored (TA) proteins to the endoplasmic reticulum. Acts as a membrane receptor for soluble GET3, which recognizes and selectively binds the transmembrane domain of TA proteins in the cytosol.</text>
</comment>
<comment type="subunit">
    <text evidence="1">Interacts with GET3.</text>
</comment>
<comment type="subcellular location">
    <subcellularLocation>
        <location evidence="1">Endoplasmic reticulum membrane</location>
        <topology evidence="1">Multi-pass membrane protein</topology>
    </subcellularLocation>
</comment>
<comment type="similarity">
    <text evidence="1">Belongs to the WRB/GET1 family.</text>
</comment>
<gene>
    <name evidence="1" type="primary">GET1</name>
    <name type="ORF">CIMG_04193</name>
</gene>
<accession>Q1DZS0</accession>
<accession>J3KDE9</accession>